<evidence type="ECO:0000255" key="1">
    <source>
        <dbReference type="HAMAP-Rule" id="MF_00140"/>
    </source>
</evidence>
<gene>
    <name evidence="1" type="primary">trpS</name>
</gene>
<reference key="1">
    <citation type="journal article" date="2001" name="J. Bacteriol.">
        <title>Alternative pathways for siroheme synthesis in Klebsiella aerogenes.</title>
        <authorList>
            <person name="Kolko M.M."/>
            <person name="Kapetanovich L.A."/>
            <person name="Lawrence J.G."/>
        </authorList>
    </citation>
    <scope>NUCLEOTIDE SEQUENCE [GENOMIC DNA]</scope>
    <source>
        <strain>W70</strain>
    </source>
</reference>
<comment type="function">
    <text evidence="1">Catalyzes the attachment of tryptophan to tRNA(Trp).</text>
</comment>
<comment type="catalytic activity">
    <reaction evidence="1">
        <text>tRNA(Trp) + L-tryptophan + ATP = L-tryptophyl-tRNA(Trp) + AMP + diphosphate + H(+)</text>
        <dbReference type="Rhea" id="RHEA:24080"/>
        <dbReference type="Rhea" id="RHEA-COMP:9671"/>
        <dbReference type="Rhea" id="RHEA-COMP:9705"/>
        <dbReference type="ChEBI" id="CHEBI:15378"/>
        <dbReference type="ChEBI" id="CHEBI:30616"/>
        <dbReference type="ChEBI" id="CHEBI:33019"/>
        <dbReference type="ChEBI" id="CHEBI:57912"/>
        <dbReference type="ChEBI" id="CHEBI:78442"/>
        <dbReference type="ChEBI" id="CHEBI:78535"/>
        <dbReference type="ChEBI" id="CHEBI:456215"/>
        <dbReference type="EC" id="6.1.1.2"/>
    </reaction>
</comment>
<comment type="subunit">
    <text evidence="1">Homodimer.</text>
</comment>
<comment type="subcellular location">
    <subcellularLocation>
        <location evidence="1">Cytoplasm</location>
    </subcellularLocation>
</comment>
<comment type="similarity">
    <text evidence="1">Belongs to the class-I aminoacyl-tRNA synthetase family.</text>
</comment>
<dbReference type="EC" id="6.1.1.2" evidence="1"/>
<dbReference type="EMBL" id="AF308467">
    <property type="protein sequence ID" value="AAG42458.1"/>
    <property type="molecule type" value="Genomic_DNA"/>
</dbReference>
<dbReference type="SMR" id="Q9EYY6"/>
<dbReference type="STRING" id="548.EAG7_04476"/>
<dbReference type="GO" id="GO:0005829">
    <property type="term" value="C:cytosol"/>
    <property type="evidence" value="ECO:0007669"/>
    <property type="project" value="TreeGrafter"/>
</dbReference>
<dbReference type="GO" id="GO:0005524">
    <property type="term" value="F:ATP binding"/>
    <property type="evidence" value="ECO:0007669"/>
    <property type="project" value="UniProtKB-UniRule"/>
</dbReference>
<dbReference type="GO" id="GO:0004830">
    <property type="term" value="F:tryptophan-tRNA ligase activity"/>
    <property type="evidence" value="ECO:0007669"/>
    <property type="project" value="UniProtKB-UniRule"/>
</dbReference>
<dbReference type="GO" id="GO:0006436">
    <property type="term" value="P:tryptophanyl-tRNA aminoacylation"/>
    <property type="evidence" value="ECO:0007669"/>
    <property type="project" value="UniProtKB-UniRule"/>
</dbReference>
<dbReference type="CDD" id="cd00806">
    <property type="entry name" value="TrpRS_core"/>
    <property type="match status" value="1"/>
</dbReference>
<dbReference type="FunFam" id="1.10.240.10:FF:000002">
    <property type="entry name" value="Tryptophan--tRNA ligase"/>
    <property type="match status" value="1"/>
</dbReference>
<dbReference type="FunFam" id="3.40.50.620:FF:000024">
    <property type="entry name" value="Tryptophan--tRNA ligase"/>
    <property type="match status" value="1"/>
</dbReference>
<dbReference type="Gene3D" id="3.40.50.620">
    <property type="entry name" value="HUPs"/>
    <property type="match status" value="1"/>
</dbReference>
<dbReference type="Gene3D" id="1.10.240.10">
    <property type="entry name" value="Tyrosyl-Transfer RNA Synthetase"/>
    <property type="match status" value="1"/>
</dbReference>
<dbReference type="HAMAP" id="MF_00140_B">
    <property type="entry name" value="Trp_tRNA_synth_B"/>
    <property type="match status" value="1"/>
</dbReference>
<dbReference type="InterPro" id="IPR001412">
    <property type="entry name" value="aa-tRNA-synth_I_CS"/>
</dbReference>
<dbReference type="InterPro" id="IPR002305">
    <property type="entry name" value="aa-tRNA-synth_Ic"/>
</dbReference>
<dbReference type="InterPro" id="IPR014729">
    <property type="entry name" value="Rossmann-like_a/b/a_fold"/>
</dbReference>
<dbReference type="InterPro" id="IPR002306">
    <property type="entry name" value="Trp-tRNA-ligase"/>
</dbReference>
<dbReference type="InterPro" id="IPR024109">
    <property type="entry name" value="Trp-tRNA-ligase_bac-type"/>
</dbReference>
<dbReference type="InterPro" id="IPR050203">
    <property type="entry name" value="Trp-tRNA_synthetase"/>
</dbReference>
<dbReference type="NCBIfam" id="TIGR00233">
    <property type="entry name" value="trpS"/>
    <property type="match status" value="1"/>
</dbReference>
<dbReference type="PANTHER" id="PTHR43766">
    <property type="entry name" value="TRYPTOPHAN--TRNA LIGASE, MITOCHONDRIAL"/>
    <property type="match status" value="1"/>
</dbReference>
<dbReference type="PANTHER" id="PTHR43766:SF1">
    <property type="entry name" value="TRYPTOPHAN--TRNA LIGASE, MITOCHONDRIAL"/>
    <property type="match status" value="1"/>
</dbReference>
<dbReference type="Pfam" id="PF00579">
    <property type="entry name" value="tRNA-synt_1b"/>
    <property type="match status" value="1"/>
</dbReference>
<dbReference type="PRINTS" id="PR01039">
    <property type="entry name" value="TRNASYNTHTRP"/>
</dbReference>
<dbReference type="SUPFAM" id="SSF52374">
    <property type="entry name" value="Nucleotidylyl transferase"/>
    <property type="match status" value="1"/>
</dbReference>
<dbReference type="PROSITE" id="PS00178">
    <property type="entry name" value="AA_TRNA_LIGASE_I"/>
    <property type="match status" value="1"/>
</dbReference>
<sequence>MTKPIVFSGAQPSGELTIGNYMGALRQWVNMQDDYHCIYCIVDQHAITVRQDPQQLRKATLDTLALYLACGIDPQKSTIFVQSHVPEHAQLGWALNCYTYFGELSRMTQFKDKSARYAENINAGLFDYPVLMAADILLYQTNQVPVGEDQKQHLELSRDIAQRFNAIYGDIFKVPEPFIPKSGARVMSLLEPTKKMSKSDDNRNNVIGLLEDPKSVVKKIKRAVTDSDEPPVVRYDLKEKAGVSNLLDILSAVTGKTIPELEQHFEGKMYGHLKGEVAEAVSGMLIDLQERYHRFRNDEAFLNQVMKDGAEKASARASQTLKAVYEAIGFVAKP</sequence>
<feature type="chain" id="PRO_0000136639" description="Tryptophan--tRNA ligase">
    <location>
        <begin position="1"/>
        <end position="334"/>
    </location>
</feature>
<feature type="short sequence motif" description="'HIGH' region" evidence="1">
    <location>
        <begin position="12"/>
        <end position="20"/>
    </location>
</feature>
<feature type="short sequence motif" description="'KMSKS' region" evidence="1">
    <location>
        <begin position="195"/>
        <end position="199"/>
    </location>
</feature>
<feature type="binding site" evidence="1">
    <location>
        <begin position="11"/>
        <end position="13"/>
    </location>
    <ligand>
        <name>ATP</name>
        <dbReference type="ChEBI" id="CHEBI:30616"/>
    </ligand>
</feature>
<feature type="binding site" evidence="1">
    <location>
        <begin position="19"/>
        <end position="20"/>
    </location>
    <ligand>
        <name>ATP</name>
        <dbReference type="ChEBI" id="CHEBI:30616"/>
    </ligand>
</feature>
<feature type="binding site" evidence="1">
    <location>
        <position position="135"/>
    </location>
    <ligand>
        <name>L-tryptophan</name>
        <dbReference type="ChEBI" id="CHEBI:57912"/>
    </ligand>
</feature>
<feature type="binding site" evidence="1">
    <location>
        <begin position="147"/>
        <end position="149"/>
    </location>
    <ligand>
        <name>ATP</name>
        <dbReference type="ChEBI" id="CHEBI:30616"/>
    </ligand>
</feature>
<feature type="binding site" evidence="1">
    <location>
        <position position="186"/>
    </location>
    <ligand>
        <name>ATP</name>
        <dbReference type="ChEBI" id="CHEBI:30616"/>
    </ligand>
</feature>
<feature type="binding site" evidence="1">
    <location>
        <begin position="195"/>
        <end position="199"/>
    </location>
    <ligand>
        <name>ATP</name>
        <dbReference type="ChEBI" id="CHEBI:30616"/>
    </ligand>
</feature>
<protein>
    <recommendedName>
        <fullName evidence="1">Tryptophan--tRNA ligase</fullName>
        <ecNumber evidence="1">6.1.1.2</ecNumber>
    </recommendedName>
    <alternativeName>
        <fullName evidence="1">Tryptophanyl-tRNA synthetase</fullName>
        <shortName evidence="1">TrpRS</shortName>
    </alternativeName>
</protein>
<name>SYW_KLEAE</name>
<keyword id="KW-0030">Aminoacyl-tRNA synthetase</keyword>
<keyword id="KW-0067">ATP-binding</keyword>
<keyword id="KW-0963">Cytoplasm</keyword>
<keyword id="KW-0436">Ligase</keyword>
<keyword id="KW-0547">Nucleotide-binding</keyword>
<keyword id="KW-0648">Protein biosynthesis</keyword>
<accession>Q9EYY6</accession>
<proteinExistence type="inferred from homology"/>
<organism>
    <name type="scientific">Klebsiella aerogenes</name>
    <name type="common">Enterobacter aerogenes</name>
    <dbReference type="NCBI Taxonomy" id="548"/>
    <lineage>
        <taxon>Bacteria</taxon>
        <taxon>Pseudomonadati</taxon>
        <taxon>Pseudomonadota</taxon>
        <taxon>Gammaproteobacteria</taxon>
        <taxon>Enterobacterales</taxon>
        <taxon>Enterobacteriaceae</taxon>
        <taxon>Klebsiella/Raoultella group</taxon>
        <taxon>Klebsiella</taxon>
    </lineage>
</organism>